<name>RL32_AROAE</name>
<feature type="chain" id="PRO_0000225700" description="Large ribosomal subunit protein bL32">
    <location>
        <begin position="1"/>
        <end position="59"/>
    </location>
</feature>
<feature type="region of interest" description="Disordered" evidence="2">
    <location>
        <begin position="1"/>
        <end position="28"/>
    </location>
</feature>
<keyword id="KW-1185">Reference proteome</keyword>
<keyword id="KW-0687">Ribonucleoprotein</keyword>
<keyword id="KW-0689">Ribosomal protein</keyword>
<proteinExistence type="inferred from homology"/>
<organism>
    <name type="scientific">Aromatoleum aromaticum (strain DSM 19018 / LMG 30748 / EbN1)</name>
    <name type="common">Azoarcus sp. (strain EbN1)</name>
    <dbReference type="NCBI Taxonomy" id="76114"/>
    <lineage>
        <taxon>Bacteria</taxon>
        <taxon>Pseudomonadati</taxon>
        <taxon>Pseudomonadota</taxon>
        <taxon>Betaproteobacteria</taxon>
        <taxon>Rhodocyclales</taxon>
        <taxon>Rhodocyclaceae</taxon>
        <taxon>Aromatoleum</taxon>
    </lineage>
</organism>
<gene>
    <name evidence="1" type="primary">rpmF</name>
    <name type="ordered locus">AZOSEA31010</name>
    <name type="ORF">ebC5</name>
</gene>
<evidence type="ECO:0000255" key="1">
    <source>
        <dbReference type="HAMAP-Rule" id="MF_00340"/>
    </source>
</evidence>
<evidence type="ECO:0000256" key="2">
    <source>
        <dbReference type="SAM" id="MobiDB-lite"/>
    </source>
</evidence>
<evidence type="ECO:0000305" key="3"/>
<reference key="1">
    <citation type="journal article" date="2005" name="Arch. Microbiol.">
        <title>The genome sequence of an anaerobic aromatic-degrading denitrifying bacterium, strain EbN1.</title>
        <authorList>
            <person name="Rabus R."/>
            <person name="Kube M."/>
            <person name="Heider J."/>
            <person name="Beck A."/>
            <person name="Heitmann K."/>
            <person name="Widdel F."/>
            <person name="Reinhardt R."/>
        </authorList>
    </citation>
    <scope>NUCLEOTIDE SEQUENCE [LARGE SCALE GENOMIC DNA]</scope>
    <source>
        <strain>DSM 19018 / LMG 30748 / EbN1</strain>
    </source>
</reference>
<protein>
    <recommendedName>
        <fullName evidence="1">Large ribosomal subunit protein bL32</fullName>
    </recommendedName>
    <alternativeName>
        <fullName evidence="3">50S ribosomal protein L32</fullName>
    </alternativeName>
</protein>
<comment type="similarity">
    <text evidence="1">Belongs to the bacterial ribosomal protein bL32 family.</text>
</comment>
<dbReference type="EMBL" id="CR555306">
    <property type="protein sequence ID" value="CAI09226.1"/>
    <property type="molecule type" value="Genomic_DNA"/>
</dbReference>
<dbReference type="RefSeq" id="WP_011238903.1">
    <property type="nucleotide sequence ID" value="NC_006513.1"/>
</dbReference>
<dbReference type="SMR" id="Q5P0D8"/>
<dbReference type="STRING" id="76114.ebC5"/>
<dbReference type="KEGG" id="eba:ebC5"/>
<dbReference type="eggNOG" id="COG0333">
    <property type="taxonomic scope" value="Bacteria"/>
</dbReference>
<dbReference type="HOGENOM" id="CLU_129084_2_1_4"/>
<dbReference type="OrthoDB" id="9801927at2"/>
<dbReference type="Proteomes" id="UP000006552">
    <property type="component" value="Chromosome"/>
</dbReference>
<dbReference type="GO" id="GO:0015934">
    <property type="term" value="C:large ribosomal subunit"/>
    <property type="evidence" value="ECO:0007669"/>
    <property type="project" value="InterPro"/>
</dbReference>
<dbReference type="GO" id="GO:0003735">
    <property type="term" value="F:structural constituent of ribosome"/>
    <property type="evidence" value="ECO:0007669"/>
    <property type="project" value="InterPro"/>
</dbReference>
<dbReference type="GO" id="GO:0006412">
    <property type="term" value="P:translation"/>
    <property type="evidence" value="ECO:0007669"/>
    <property type="project" value="UniProtKB-UniRule"/>
</dbReference>
<dbReference type="HAMAP" id="MF_00340">
    <property type="entry name" value="Ribosomal_bL32"/>
    <property type="match status" value="1"/>
</dbReference>
<dbReference type="InterPro" id="IPR002677">
    <property type="entry name" value="Ribosomal_bL32"/>
</dbReference>
<dbReference type="InterPro" id="IPR044957">
    <property type="entry name" value="Ribosomal_bL32_bact"/>
</dbReference>
<dbReference type="InterPro" id="IPR011332">
    <property type="entry name" value="Ribosomal_zn-bd"/>
</dbReference>
<dbReference type="NCBIfam" id="TIGR01031">
    <property type="entry name" value="rpmF_bact"/>
    <property type="match status" value="1"/>
</dbReference>
<dbReference type="PANTHER" id="PTHR35534">
    <property type="entry name" value="50S RIBOSOMAL PROTEIN L32"/>
    <property type="match status" value="1"/>
</dbReference>
<dbReference type="PANTHER" id="PTHR35534:SF1">
    <property type="entry name" value="LARGE RIBOSOMAL SUBUNIT PROTEIN BL32"/>
    <property type="match status" value="1"/>
</dbReference>
<dbReference type="Pfam" id="PF01783">
    <property type="entry name" value="Ribosomal_L32p"/>
    <property type="match status" value="1"/>
</dbReference>
<dbReference type="SUPFAM" id="SSF57829">
    <property type="entry name" value="Zn-binding ribosomal proteins"/>
    <property type="match status" value="1"/>
</dbReference>
<accession>Q5P0D8</accession>
<sequence length="59" mass="6541">MAVQQNKKSPSKRGMHRAHDFLTDPPLAVEPTTGEVHLRHHISPSGVYRGKKVVKAKGE</sequence>